<name>PYRC_LEPCP</name>
<accession>B1XWS5</accession>
<comment type="function">
    <text evidence="1">Catalyzes the reversible cyclization of carbamoyl aspartate to dihydroorotate.</text>
</comment>
<comment type="catalytic activity">
    <reaction evidence="1">
        <text>(S)-dihydroorotate + H2O = N-carbamoyl-L-aspartate + H(+)</text>
        <dbReference type="Rhea" id="RHEA:24296"/>
        <dbReference type="ChEBI" id="CHEBI:15377"/>
        <dbReference type="ChEBI" id="CHEBI:15378"/>
        <dbReference type="ChEBI" id="CHEBI:30864"/>
        <dbReference type="ChEBI" id="CHEBI:32814"/>
        <dbReference type="EC" id="3.5.2.3"/>
    </reaction>
</comment>
<comment type="cofactor">
    <cofactor evidence="1">
        <name>Zn(2+)</name>
        <dbReference type="ChEBI" id="CHEBI:29105"/>
    </cofactor>
    <text evidence="1">Binds 2 Zn(2+) ions per subunit.</text>
</comment>
<comment type="pathway">
    <text evidence="1">Pyrimidine metabolism; UMP biosynthesis via de novo pathway; (S)-dihydroorotate from bicarbonate: step 3/3.</text>
</comment>
<comment type="subunit">
    <text evidence="1">Homodimer.</text>
</comment>
<comment type="similarity">
    <text evidence="1">Belongs to the metallo-dependent hydrolases superfamily. DHOase family. Class II DHOase subfamily.</text>
</comment>
<sequence>MTTTLTLIRPDDWHLHVRDGAALAAVVPHTARQFARAIIMPNLRPPVTTAAQAVAYRERIAAAVPAGVDFTPLMTLYLTDNTPADEIVRAQAAGVVALKLYPAGATTNSDAGVTDVRKTYAALEAMQRAGMPLLVHGEVTDPAVDVFDREAVFIDQVMRPLRRDFPELKVVFEHITTQEAADYVAEADAHTAATITAHHLLYNRNAIFTGGLRPHYYCLPVLKREVHRLALVKAATSGSSKFFLGTDSAPHPAHLKEHAAACAGCYTALSAIELYAQAFDDAGALDKLEGFASLHGPDFYGLPRNSGTLTLRREPWQLPETLAFGDAQLKPLCGGETLDWRLLA</sequence>
<protein>
    <recommendedName>
        <fullName evidence="1">Dihydroorotase</fullName>
        <shortName evidence="1">DHOase</shortName>
        <ecNumber evidence="1">3.5.2.3</ecNumber>
    </recommendedName>
</protein>
<feature type="chain" id="PRO_1000100049" description="Dihydroorotase">
    <location>
        <begin position="1"/>
        <end position="344"/>
    </location>
</feature>
<feature type="active site" evidence="1">
    <location>
        <position position="247"/>
    </location>
</feature>
<feature type="binding site" evidence="1">
    <location>
        <position position="14"/>
    </location>
    <ligand>
        <name>Zn(2+)</name>
        <dbReference type="ChEBI" id="CHEBI:29105"/>
        <label>1</label>
    </ligand>
</feature>
<feature type="binding site" evidence="1">
    <location>
        <begin position="16"/>
        <end position="18"/>
    </location>
    <ligand>
        <name>substrate</name>
    </ligand>
</feature>
<feature type="binding site" evidence="1">
    <location>
        <position position="16"/>
    </location>
    <ligand>
        <name>Zn(2+)</name>
        <dbReference type="ChEBI" id="CHEBI:29105"/>
        <label>1</label>
    </ligand>
</feature>
<feature type="binding site" evidence="1">
    <location>
        <position position="42"/>
    </location>
    <ligand>
        <name>substrate</name>
    </ligand>
</feature>
<feature type="binding site" description="via carbamate group" evidence="1">
    <location>
        <position position="99"/>
    </location>
    <ligand>
        <name>Zn(2+)</name>
        <dbReference type="ChEBI" id="CHEBI:29105"/>
        <label>1</label>
    </ligand>
</feature>
<feature type="binding site" description="via carbamate group" evidence="1">
    <location>
        <position position="99"/>
    </location>
    <ligand>
        <name>Zn(2+)</name>
        <dbReference type="ChEBI" id="CHEBI:29105"/>
        <label>2</label>
    </ligand>
</feature>
<feature type="binding site" evidence="1">
    <location>
        <position position="136"/>
    </location>
    <ligand>
        <name>substrate</name>
    </ligand>
</feature>
<feature type="binding site" evidence="1">
    <location>
        <position position="136"/>
    </location>
    <ligand>
        <name>Zn(2+)</name>
        <dbReference type="ChEBI" id="CHEBI:29105"/>
        <label>2</label>
    </ligand>
</feature>
<feature type="binding site" evidence="1">
    <location>
        <position position="174"/>
    </location>
    <ligand>
        <name>Zn(2+)</name>
        <dbReference type="ChEBI" id="CHEBI:29105"/>
        <label>2</label>
    </ligand>
</feature>
<feature type="binding site" evidence="1">
    <location>
        <position position="219"/>
    </location>
    <ligand>
        <name>substrate</name>
    </ligand>
</feature>
<feature type="binding site" evidence="1">
    <location>
        <position position="247"/>
    </location>
    <ligand>
        <name>Zn(2+)</name>
        <dbReference type="ChEBI" id="CHEBI:29105"/>
        <label>1</label>
    </ligand>
</feature>
<feature type="binding site" evidence="1">
    <location>
        <position position="251"/>
    </location>
    <ligand>
        <name>substrate</name>
    </ligand>
</feature>
<feature type="binding site" evidence="1">
    <location>
        <position position="263"/>
    </location>
    <ligand>
        <name>substrate</name>
    </ligand>
</feature>
<feature type="modified residue" description="N6-carboxylysine" evidence="1">
    <location>
        <position position="99"/>
    </location>
</feature>
<evidence type="ECO:0000255" key="1">
    <source>
        <dbReference type="HAMAP-Rule" id="MF_00219"/>
    </source>
</evidence>
<gene>
    <name evidence="1" type="primary">pyrC</name>
    <name type="ordered locus">Lcho_4020</name>
</gene>
<keyword id="KW-0378">Hydrolase</keyword>
<keyword id="KW-0479">Metal-binding</keyword>
<keyword id="KW-0665">Pyrimidine biosynthesis</keyword>
<keyword id="KW-1185">Reference proteome</keyword>
<keyword id="KW-0862">Zinc</keyword>
<dbReference type="EC" id="3.5.2.3" evidence="1"/>
<dbReference type="EMBL" id="CP001013">
    <property type="protein sequence ID" value="ACB36274.1"/>
    <property type="molecule type" value="Genomic_DNA"/>
</dbReference>
<dbReference type="RefSeq" id="WP_012349019.1">
    <property type="nucleotide sequence ID" value="NC_010524.1"/>
</dbReference>
<dbReference type="SMR" id="B1XWS5"/>
<dbReference type="STRING" id="395495.Lcho_4020"/>
<dbReference type="MEROPS" id="M38.A02"/>
<dbReference type="KEGG" id="lch:Lcho_4020"/>
<dbReference type="eggNOG" id="COG0418">
    <property type="taxonomic scope" value="Bacteria"/>
</dbReference>
<dbReference type="HOGENOM" id="CLU_041558_1_0_4"/>
<dbReference type="OrthoDB" id="9808095at2"/>
<dbReference type="UniPathway" id="UPA00070">
    <property type="reaction ID" value="UER00117"/>
</dbReference>
<dbReference type="Proteomes" id="UP000001693">
    <property type="component" value="Chromosome"/>
</dbReference>
<dbReference type="GO" id="GO:0005829">
    <property type="term" value="C:cytosol"/>
    <property type="evidence" value="ECO:0007669"/>
    <property type="project" value="TreeGrafter"/>
</dbReference>
<dbReference type="GO" id="GO:0004151">
    <property type="term" value="F:dihydroorotase activity"/>
    <property type="evidence" value="ECO:0007669"/>
    <property type="project" value="UniProtKB-UniRule"/>
</dbReference>
<dbReference type="GO" id="GO:0008270">
    <property type="term" value="F:zinc ion binding"/>
    <property type="evidence" value="ECO:0007669"/>
    <property type="project" value="UniProtKB-UniRule"/>
</dbReference>
<dbReference type="GO" id="GO:0006207">
    <property type="term" value="P:'de novo' pyrimidine nucleobase biosynthetic process"/>
    <property type="evidence" value="ECO:0007669"/>
    <property type="project" value="TreeGrafter"/>
</dbReference>
<dbReference type="GO" id="GO:0044205">
    <property type="term" value="P:'de novo' UMP biosynthetic process"/>
    <property type="evidence" value="ECO:0007669"/>
    <property type="project" value="UniProtKB-UniRule"/>
</dbReference>
<dbReference type="CDD" id="cd01294">
    <property type="entry name" value="DHOase"/>
    <property type="match status" value="1"/>
</dbReference>
<dbReference type="FunFam" id="3.20.20.140:FF:000006">
    <property type="entry name" value="Dihydroorotase"/>
    <property type="match status" value="1"/>
</dbReference>
<dbReference type="Gene3D" id="3.20.20.140">
    <property type="entry name" value="Metal-dependent hydrolases"/>
    <property type="match status" value="1"/>
</dbReference>
<dbReference type="HAMAP" id="MF_00219">
    <property type="entry name" value="PyrC_classII"/>
    <property type="match status" value="1"/>
</dbReference>
<dbReference type="InterPro" id="IPR006680">
    <property type="entry name" value="Amidohydro-rel"/>
</dbReference>
<dbReference type="InterPro" id="IPR004721">
    <property type="entry name" value="DHOdimr"/>
</dbReference>
<dbReference type="InterPro" id="IPR002195">
    <property type="entry name" value="Dihydroorotase_CS"/>
</dbReference>
<dbReference type="InterPro" id="IPR032466">
    <property type="entry name" value="Metal_Hydrolase"/>
</dbReference>
<dbReference type="NCBIfam" id="TIGR00856">
    <property type="entry name" value="pyrC_dimer"/>
    <property type="match status" value="1"/>
</dbReference>
<dbReference type="PANTHER" id="PTHR43137">
    <property type="entry name" value="DIHYDROOROTASE"/>
    <property type="match status" value="1"/>
</dbReference>
<dbReference type="PANTHER" id="PTHR43137:SF1">
    <property type="entry name" value="DIHYDROOROTASE"/>
    <property type="match status" value="1"/>
</dbReference>
<dbReference type="Pfam" id="PF01979">
    <property type="entry name" value="Amidohydro_1"/>
    <property type="match status" value="1"/>
</dbReference>
<dbReference type="PIRSF" id="PIRSF001237">
    <property type="entry name" value="DHOdimr"/>
    <property type="match status" value="1"/>
</dbReference>
<dbReference type="SUPFAM" id="SSF51556">
    <property type="entry name" value="Metallo-dependent hydrolases"/>
    <property type="match status" value="1"/>
</dbReference>
<dbReference type="PROSITE" id="PS00482">
    <property type="entry name" value="DIHYDROOROTASE_1"/>
    <property type="match status" value="1"/>
</dbReference>
<dbReference type="PROSITE" id="PS00483">
    <property type="entry name" value="DIHYDROOROTASE_2"/>
    <property type="match status" value="1"/>
</dbReference>
<proteinExistence type="inferred from homology"/>
<reference key="1">
    <citation type="submission" date="2008-03" db="EMBL/GenBank/DDBJ databases">
        <title>Complete sequence of Leptothrix cholodnii SP-6.</title>
        <authorList>
            <consortium name="US DOE Joint Genome Institute"/>
            <person name="Copeland A."/>
            <person name="Lucas S."/>
            <person name="Lapidus A."/>
            <person name="Glavina del Rio T."/>
            <person name="Dalin E."/>
            <person name="Tice H."/>
            <person name="Bruce D."/>
            <person name="Goodwin L."/>
            <person name="Pitluck S."/>
            <person name="Chertkov O."/>
            <person name="Brettin T."/>
            <person name="Detter J.C."/>
            <person name="Han C."/>
            <person name="Kuske C.R."/>
            <person name="Schmutz J."/>
            <person name="Larimer F."/>
            <person name="Land M."/>
            <person name="Hauser L."/>
            <person name="Kyrpides N."/>
            <person name="Lykidis A."/>
            <person name="Emerson D."/>
            <person name="Richardson P."/>
        </authorList>
    </citation>
    <scope>NUCLEOTIDE SEQUENCE [LARGE SCALE GENOMIC DNA]</scope>
    <source>
        <strain>ATCC 51168 / LMG 8142 / SP-6</strain>
    </source>
</reference>
<organism>
    <name type="scientific">Leptothrix cholodnii (strain ATCC 51168 / LMG 8142 / SP-6)</name>
    <name type="common">Leptothrix discophora (strain SP-6)</name>
    <dbReference type="NCBI Taxonomy" id="395495"/>
    <lineage>
        <taxon>Bacteria</taxon>
        <taxon>Pseudomonadati</taxon>
        <taxon>Pseudomonadota</taxon>
        <taxon>Betaproteobacteria</taxon>
        <taxon>Burkholderiales</taxon>
        <taxon>Sphaerotilaceae</taxon>
        <taxon>Leptothrix</taxon>
    </lineage>
</organism>